<dbReference type="EMBL" id="U33007">
    <property type="protein sequence ID" value="AAB64892.1"/>
    <property type="molecule type" value="Genomic_DNA"/>
</dbReference>
<dbReference type="PIR" id="S69735">
    <property type="entry name" value="S69735"/>
</dbReference>
<dbReference type="DIP" id="DIP-5536N"/>
<dbReference type="IntAct" id="P87266">
    <property type="interactions" value="21"/>
</dbReference>
<dbReference type="STRING" id="4932.YDR413C"/>
<dbReference type="PaxDb" id="4932-YDR413C"/>
<dbReference type="EnsemblFungi" id="YDR413C_mRNA">
    <property type="protein sequence ID" value="YDR413C"/>
    <property type="gene ID" value="YDR413C"/>
</dbReference>
<dbReference type="AGR" id="SGD:S000002821"/>
<dbReference type="SGD" id="S000002821">
    <property type="gene designation" value="YDR413C"/>
</dbReference>
<dbReference type="HOGENOM" id="CLU_1422467_0_0_1"/>
<dbReference type="GO" id="GO:0016020">
    <property type="term" value="C:membrane"/>
    <property type="evidence" value="ECO:0007669"/>
    <property type="project" value="UniProtKB-SubCell"/>
</dbReference>
<proteinExistence type="uncertain"/>
<gene>
    <name type="ordered locus">YDR413C</name>
</gene>
<name>YD413_YEAST</name>
<protein>
    <recommendedName>
        <fullName>Putative uncharacterized protein YDR413C</fullName>
    </recommendedName>
</protein>
<keyword id="KW-0472">Membrane</keyword>
<keyword id="KW-0812">Transmembrane</keyword>
<keyword id="KW-1133">Transmembrane helix</keyword>
<feature type="chain" id="PRO_0000299890" description="Putative uncharacterized protein YDR413C">
    <location>
        <begin position="1"/>
        <end position="191"/>
    </location>
</feature>
<feature type="transmembrane region" description="Helical" evidence="1">
    <location>
        <begin position="12"/>
        <end position="32"/>
    </location>
</feature>
<feature type="transmembrane region" description="Helical" evidence="1">
    <location>
        <begin position="48"/>
        <end position="68"/>
    </location>
</feature>
<feature type="transmembrane region" description="Helical" evidence="1">
    <location>
        <begin position="92"/>
        <end position="112"/>
    </location>
</feature>
<feature type="transmembrane region" description="Helical" evidence="1">
    <location>
        <begin position="168"/>
        <end position="188"/>
    </location>
</feature>
<sequence length="191" mass="21327">MRLHYLLRLLSFAFLWFILRSFLVKYLNFFTLGFFFCFSSTPRNFAYLVALFMLCLSTFSAFSNLTLFSWAKYSKLSLGSNVSNSTVVESSYISVIAPFFKIGFTLLSLLSLSPSSLSESNPCQDSSDSTCKSSVLSFFASSISASKFKLSLNVFNCSSITSLRSCRIFCLSSIFLSLSCSLINSCAFFCL</sequence>
<reference key="1">
    <citation type="journal article" date="1997" name="Nature">
        <title>The nucleotide sequence of Saccharomyces cerevisiae chromosome IV.</title>
        <authorList>
            <person name="Jacq C."/>
            <person name="Alt-Moerbe J."/>
            <person name="Andre B."/>
            <person name="Arnold W."/>
            <person name="Bahr A."/>
            <person name="Ballesta J.P.G."/>
            <person name="Bargues M."/>
            <person name="Baron L."/>
            <person name="Becker A."/>
            <person name="Biteau N."/>
            <person name="Bloecker H."/>
            <person name="Blugeon C."/>
            <person name="Boskovic J."/>
            <person name="Brandt P."/>
            <person name="Brueckner M."/>
            <person name="Buitrago M.J."/>
            <person name="Coster F."/>
            <person name="Delaveau T."/>
            <person name="del Rey F."/>
            <person name="Dujon B."/>
            <person name="Eide L.G."/>
            <person name="Garcia-Cantalejo J.M."/>
            <person name="Goffeau A."/>
            <person name="Gomez-Peris A."/>
            <person name="Granotier C."/>
            <person name="Hanemann V."/>
            <person name="Hankeln T."/>
            <person name="Hoheisel J.D."/>
            <person name="Jaeger W."/>
            <person name="Jimenez A."/>
            <person name="Jonniaux J.-L."/>
            <person name="Kraemer C."/>
            <person name="Kuester H."/>
            <person name="Laamanen P."/>
            <person name="Legros Y."/>
            <person name="Louis E.J."/>
            <person name="Moeller-Rieker S."/>
            <person name="Monnet A."/>
            <person name="Moro M."/>
            <person name="Mueller-Auer S."/>
            <person name="Nussbaumer B."/>
            <person name="Paricio N."/>
            <person name="Paulin L."/>
            <person name="Perea J."/>
            <person name="Perez-Alonso M."/>
            <person name="Perez-Ortin J.E."/>
            <person name="Pohl T.M."/>
            <person name="Prydz H."/>
            <person name="Purnelle B."/>
            <person name="Rasmussen S.W."/>
            <person name="Remacha M.A."/>
            <person name="Revuelta J.L."/>
            <person name="Rieger M."/>
            <person name="Salom D."/>
            <person name="Saluz H.P."/>
            <person name="Saiz J.E."/>
            <person name="Saren A.-M."/>
            <person name="Schaefer M."/>
            <person name="Scharfe M."/>
            <person name="Schmidt E.R."/>
            <person name="Schneider C."/>
            <person name="Scholler P."/>
            <person name="Schwarz S."/>
            <person name="Soler-Mira A."/>
            <person name="Urrestarazu L.A."/>
            <person name="Verhasselt P."/>
            <person name="Vissers S."/>
            <person name="Voet M."/>
            <person name="Volckaert G."/>
            <person name="Wagner G."/>
            <person name="Wambutt R."/>
            <person name="Wedler E."/>
            <person name="Wedler H."/>
            <person name="Woelfl S."/>
            <person name="Harris D.E."/>
            <person name="Bowman S."/>
            <person name="Brown D."/>
            <person name="Churcher C.M."/>
            <person name="Connor R."/>
            <person name="Dedman K."/>
            <person name="Gentles S."/>
            <person name="Hamlin N."/>
            <person name="Hunt S."/>
            <person name="Jones L."/>
            <person name="McDonald S."/>
            <person name="Murphy L.D."/>
            <person name="Niblett D."/>
            <person name="Odell C."/>
            <person name="Oliver K."/>
            <person name="Rajandream M.A."/>
            <person name="Richards C."/>
            <person name="Shore L."/>
            <person name="Walsh S.V."/>
            <person name="Barrell B.G."/>
            <person name="Dietrich F.S."/>
            <person name="Mulligan J.T."/>
            <person name="Allen E."/>
            <person name="Araujo R."/>
            <person name="Aviles E."/>
            <person name="Berno A."/>
            <person name="Carpenter J."/>
            <person name="Chen E."/>
            <person name="Cherry J.M."/>
            <person name="Chung E."/>
            <person name="Duncan M."/>
            <person name="Hunicke-Smith S."/>
            <person name="Hyman R.W."/>
            <person name="Komp C."/>
            <person name="Lashkari D."/>
            <person name="Lew H."/>
            <person name="Lin D."/>
            <person name="Mosedale D."/>
            <person name="Nakahara K."/>
            <person name="Namath A."/>
            <person name="Oefner P."/>
            <person name="Oh C."/>
            <person name="Petel F.X."/>
            <person name="Roberts D."/>
            <person name="Schramm S."/>
            <person name="Schroeder M."/>
            <person name="Shogren T."/>
            <person name="Shroff N."/>
            <person name="Winant A."/>
            <person name="Yelton M.A."/>
            <person name="Botstein D."/>
            <person name="Davis R.W."/>
            <person name="Johnston M."/>
            <person name="Andrews S."/>
            <person name="Brinkman R."/>
            <person name="Cooper J."/>
            <person name="Ding H."/>
            <person name="Du Z."/>
            <person name="Favello A."/>
            <person name="Fulton L."/>
            <person name="Gattung S."/>
            <person name="Greco T."/>
            <person name="Hallsworth K."/>
            <person name="Hawkins J."/>
            <person name="Hillier L.W."/>
            <person name="Jier M."/>
            <person name="Johnson D."/>
            <person name="Johnston L."/>
            <person name="Kirsten J."/>
            <person name="Kucaba T."/>
            <person name="Langston Y."/>
            <person name="Latreille P."/>
            <person name="Le T."/>
            <person name="Mardis E."/>
            <person name="Menezes S."/>
            <person name="Miller N."/>
            <person name="Nhan M."/>
            <person name="Pauley A."/>
            <person name="Peluso D."/>
            <person name="Rifkin L."/>
            <person name="Riles L."/>
            <person name="Taich A."/>
            <person name="Trevaskis E."/>
            <person name="Vignati D."/>
            <person name="Wilcox L."/>
            <person name="Wohldman P."/>
            <person name="Vaudin M."/>
            <person name="Wilson R."/>
            <person name="Waterston R."/>
            <person name="Albermann K."/>
            <person name="Hani J."/>
            <person name="Heumann K."/>
            <person name="Kleine K."/>
            <person name="Mewes H.-W."/>
            <person name="Zollner A."/>
            <person name="Zaccaria P."/>
        </authorList>
    </citation>
    <scope>NUCLEOTIDE SEQUENCE [LARGE SCALE GENOMIC DNA]</scope>
    <source>
        <strain>ATCC 204508 / S288c</strain>
    </source>
</reference>
<reference key="2">
    <citation type="journal article" date="2014" name="G3 (Bethesda)">
        <title>The reference genome sequence of Saccharomyces cerevisiae: Then and now.</title>
        <authorList>
            <person name="Engel S.R."/>
            <person name="Dietrich F.S."/>
            <person name="Fisk D.G."/>
            <person name="Binkley G."/>
            <person name="Balakrishnan R."/>
            <person name="Costanzo M.C."/>
            <person name="Dwight S.S."/>
            <person name="Hitz B.C."/>
            <person name="Karra K."/>
            <person name="Nash R.S."/>
            <person name="Weng S."/>
            <person name="Wong E.D."/>
            <person name="Lloyd P."/>
            <person name="Skrzypek M.S."/>
            <person name="Miyasato S.R."/>
            <person name="Simison M."/>
            <person name="Cherry J.M."/>
        </authorList>
    </citation>
    <scope>GENOME REANNOTATION</scope>
    <source>
        <strain>ATCC 204508 / S288c</strain>
    </source>
</reference>
<comment type="subcellular location">
    <subcellularLocation>
        <location evidence="2">Membrane</location>
        <topology evidence="2">Multi-pass membrane protein</topology>
    </subcellularLocation>
</comment>
<comment type="miscellaneous">
    <text evidence="2">Partially overlaps YDR412W.</text>
</comment>
<comment type="caution">
    <text evidence="3">Product of a dubious gene prediction unlikely to encode a functional protein. Because of that it is not part of the S.cerevisiae S288c complete/reference proteome set.</text>
</comment>
<accession>P87266</accession>
<organism>
    <name type="scientific">Saccharomyces cerevisiae (strain ATCC 204508 / S288c)</name>
    <name type="common">Baker's yeast</name>
    <dbReference type="NCBI Taxonomy" id="559292"/>
    <lineage>
        <taxon>Eukaryota</taxon>
        <taxon>Fungi</taxon>
        <taxon>Dikarya</taxon>
        <taxon>Ascomycota</taxon>
        <taxon>Saccharomycotina</taxon>
        <taxon>Saccharomycetes</taxon>
        <taxon>Saccharomycetales</taxon>
        <taxon>Saccharomycetaceae</taxon>
        <taxon>Saccharomyces</taxon>
    </lineage>
</organism>
<evidence type="ECO:0000255" key="1"/>
<evidence type="ECO:0000305" key="2"/>
<evidence type="ECO:0000305" key="3">
    <source>
    </source>
</evidence>